<comment type="function">
    <text evidence="1">Catalyzes the attachment of threonine to tRNA(Thr) in a two-step reaction: L-threonine is first activated by ATP to form Thr-AMP and then transferred to the acceptor end of tRNA(Thr). Also edits incorrectly charged L-seryl-tRNA(Thr).</text>
</comment>
<comment type="catalytic activity">
    <reaction evidence="1">
        <text>tRNA(Thr) + L-threonine + ATP = L-threonyl-tRNA(Thr) + AMP + diphosphate + H(+)</text>
        <dbReference type="Rhea" id="RHEA:24624"/>
        <dbReference type="Rhea" id="RHEA-COMP:9670"/>
        <dbReference type="Rhea" id="RHEA-COMP:9704"/>
        <dbReference type="ChEBI" id="CHEBI:15378"/>
        <dbReference type="ChEBI" id="CHEBI:30616"/>
        <dbReference type="ChEBI" id="CHEBI:33019"/>
        <dbReference type="ChEBI" id="CHEBI:57926"/>
        <dbReference type="ChEBI" id="CHEBI:78442"/>
        <dbReference type="ChEBI" id="CHEBI:78534"/>
        <dbReference type="ChEBI" id="CHEBI:456215"/>
        <dbReference type="EC" id="6.1.1.3"/>
    </reaction>
</comment>
<comment type="cofactor">
    <cofactor evidence="1">
        <name>Zn(2+)</name>
        <dbReference type="ChEBI" id="CHEBI:29105"/>
    </cofactor>
    <text evidence="1">Binds 1 zinc ion per subunit.</text>
</comment>
<comment type="subunit">
    <text evidence="1">Homodimer.</text>
</comment>
<comment type="subcellular location">
    <subcellularLocation>
        <location evidence="1">Cytoplasm</location>
    </subcellularLocation>
</comment>
<comment type="similarity">
    <text evidence="1">Belongs to the class-II aminoacyl-tRNA synthetase family.</text>
</comment>
<sequence>MTVVRLPDGTDKVFDYPVTVLDVAESIGPGLARVALAGKLNGRLVDLSEPIEIDSDLVLITNKDPEGLEIIRHSCAHLLAHAVKELFPSAQVTIGPVIEDGFYYDFSYERPFTPEDLAAIEKRMQEISRRNLKIERKVWDRSKAIGFFKDLGEHYKAQIIASIPNDEPVSLYSQGDFTDLCRGPHVPYTSRIKVFKLMKIAGAYWRGDSKNEMLQRIYGTAWVSSEEQNNYLRRLEEAEKRDHRKLGKQLDLFHMQEEAPGMVYWHPKGWAIWQQIEQYMRQVLAKNGYVEIRTPQVLDISLWEKSGHWENFRENMFITESESRHYAIKPMNCPGHVQVFNHGLRSYRDLPLRLAEFGSCHRNEASGALHGLMRVRSFTQDDAHIFCTEDQVLEEVTKFIDLLNQVYIDFGFHENLIKLSTRPAQRVGTEEQWDRAEAALAAALNQKELNWELQPGEGAFYGPKIEFTLKDSLGRKWQCGTLQLDFSMPARLGAGYIAEDNTKKIPVMLHRAILGSMERFIGILIEHHAGALPVWLSPDQVVVLNISRNQADYVQSITNELKQNDIRVSSDLRNEKISYKIREHSLQKVPYLIVVGDKEVENQTVTVRGRSNHDHGAMSLEGFVTLIRKEMAERV</sequence>
<dbReference type="EC" id="6.1.1.3" evidence="1"/>
<dbReference type="EMBL" id="CP000450">
    <property type="protein sequence ID" value="ABI60548.1"/>
    <property type="molecule type" value="Genomic_DNA"/>
</dbReference>
<dbReference type="RefSeq" id="WP_011635321.1">
    <property type="nucleotide sequence ID" value="NC_008344.1"/>
</dbReference>
<dbReference type="SMR" id="Q0ADN4"/>
<dbReference type="STRING" id="335283.Neut_2331"/>
<dbReference type="KEGG" id="net:Neut_2331"/>
<dbReference type="eggNOG" id="COG0441">
    <property type="taxonomic scope" value="Bacteria"/>
</dbReference>
<dbReference type="HOGENOM" id="CLU_008554_0_1_4"/>
<dbReference type="OrthoDB" id="9802304at2"/>
<dbReference type="Proteomes" id="UP000001966">
    <property type="component" value="Chromosome"/>
</dbReference>
<dbReference type="GO" id="GO:0005737">
    <property type="term" value="C:cytoplasm"/>
    <property type="evidence" value="ECO:0007669"/>
    <property type="project" value="UniProtKB-SubCell"/>
</dbReference>
<dbReference type="GO" id="GO:0005524">
    <property type="term" value="F:ATP binding"/>
    <property type="evidence" value="ECO:0007669"/>
    <property type="project" value="UniProtKB-UniRule"/>
</dbReference>
<dbReference type="GO" id="GO:0046872">
    <property type="term" value="F:metal ion binding"/>
    <property type="evidence" value="ECO:0007669"/>
    <property type="project" value="UniProtKB-KW"/>
</dbReference>
<dbReference type="GO" id="GO:0004829">
    <property type="term" value="F:threonine-tRNA ligase activity"/>
    <property type="evidence" value="ECO:0007669"/>
    <property type="project" value="UniProtKB-UniRule"/>
</dbReference>
<dbReference type="GO" id="GO:0000049">
    <property type="term" value="F:tRNA binding"/>
    <property type="evidence" value="ECO:0007669"/>
    <property type="project" value="UniProtKB-KW"/>
</dbReference>
<dbReference type="GO" id="GO:0006435">
    <property type="term" value="P:threonyl-tRNA aminoacylation"/>
    <property type="evidence" value="ECO:0007669"/>
    <property type="project" value="UniProtKB-UniRule"/>
</dbReference>
<dbReference type="CDD" id="cd01667">
    <property type="entry name" value="TGS_ThrRS"/>
    <property type="match status" value="1"/>
</dbReference>
<dbReference type="CDD" id="cd00860">
    <property type="entry name" value="ThrRS_anticodon"/>
    <property type="match status" value="1"/>
</dbReference>
<dbReference type="CDD" id="cd00771">
    <property type="entry name" value="ThrRS_core"/>
    <property type="match status" value="1"/>
</dbReference>
<dbReference type="FunFam" id="3.10.20.30:FF:000005">
    <property type="entry name" value="Threonine--tRNA ligase"/>
    <property type="match status" value="1"/>
</dbReference>
<dbReference type="FunFam" id="3.30.54.20:FF:000002">
    <property type="entry name" value="Threonine--tRNA ligase"/>
    <property type="match status" value="1"/>
</dbReference>
<dbReference type="FunFam" id="3.30.930.10:FF:000002">
    <property type="entry name" value="Threonine--tRNA ligase"/>
    <property type="match status" value="1"/>
</dbReference>
<dbReference type="FunFam" id="3.40.50.800:FF:000001">
    <property type="entry name" value="Threonine--tRNA ligase"/>
    <property type="match status" value="1"/>
</dbReference>
<dbReference type="FunFam" id="3.30.980.10:FF:000005">
    <property type="entry name" value="Threonyl-tRNA synthetase, mitochondrial"/>
    <property type="match status" value="1"/>
</dbReference>
<dbReference type="Gene3D" id="3.10.20.30">
    <property type="match status" value="1"/>
</dbReference>
<dbReference type="Gene3D" id="3.30.54.20">
    <property type="match status" value="1"/>
</dbReference>
<dbReference type="Gene3D" id="3.40.50.800">
    <property type="entry name" value="Anticodon-binding domain"/>
    <property type="match status" value="1"/>
</dbReference>
<dbReference type="Gene3D" id="3.30.930.10">
    <property type="entry name" value="Bira Bifunctional Protein, Domain 2"/>
    <property type="match status" value="1"/>
</dbReference>
<dbReference type="Gene3D" id="3.30.980.10">
    <property type="entry name" value="Threonyl-trna Synthetase, Chain A, domain 2"/>
    <property type="match status" value="1"/>
</dbReference>
<dbReference type="HAMAP" id="MF_00184">
    <property type="entry name" value="Thr_tRNA_synth"/>
    <property type="match status" value="1"/>
</dbReference>
<dbReference type="InterPro" id="IPR002314">
    <property type="entry name" value="aa-tRNA-synt_IIb"/>
</dbReference>
<dbReference type="InterPro" id="IPR006195">
    <property type="entry name" value="aa-tRNA-synth_II"/>
</dbReference>
<dbReference type="InterPro" id="IPR045864">
    <property type="entry name" value="aa-tRNA-synth_II/BPL/LPL"/>
</dbReference>
<dbReference type="InterPro" id="IPR004154">
    <property type="entry name" value="Anticodon-bd"/>
</dbReference>
<dbReference type="InterPro" id="IPR036621">
    <property type="entry name" value="Anticodon-bd_dom_sf"/>
</dbReference>
<dbReference type="InterPro" id="IPR012675">
    <property type="entry name" value="Beta-grasp_dom_sf"/>
</dbReference>
<dbReference type="InterPro" id="IPR004095">
    <property type="entry name" value="TGS"/>
</dbReference>
<dbReference type="InterPro" id="IPR012676">
    <property type="entry name" value="TGS-like"/>
</dbReference>
<dbReference type="InterPro" id="IPR002320">
    <property type="entry name" value="Thr-tRNA-ligase_IIa"/>
</dbReference>
<dbReference type="InterPro" id="IPR018163">
    <property type="entry name" value="Thr/Ala-tRNA-synth_IIc_edit"/>
</dbReference>
<dbReference type="InterPro" id="IPR047246">
    <property type="entry name" value="ThrRS_anticodon"/>
</dbReference>
<dbReference type="InterPro" id="IPR033728">
    <property type="entry name" value="ThrRS_core"/>
</dbReference>
<dbReference type="InterPro" id="IPR012947">
    <property type="entry name" value="tRNA_SAD"/>
</dbReference>
<dbReference type="NCBIfam" id="TIGR00418">
    <property type="entry name" value="thrS"/>
    <property type="match status" value="1"/>
</dbReference>
<dbReference type="PANTHER" id="PTHR11451:SF44">
    <property type="entry name" value="THREONINE--TRNA LIGASE, CHLOROPLASTIC_MITOCHONDRIAL 2"/>
    <property type="match status" value="1"/>
</dbReference>
<dbReference type="PANTHER" id="PTHR11451">
    <property type="entry name" value="THREONINE-TRNA LIGASE"/>
    <property type="match status" value="1"/>
</dbReference>
<dbReference type="Pfam" id="PF03129">
    <property type="entry name" value="HGTP_anticodon"/>
    <property type="match status" value="1"/>
</dbReference>
<dbReference type="Pfam" id="PF02824">
    <property type="entry name" value="TGS"/>
    <property type="match status" value="1"/>
</dbReference>
<dbReference type="Pfam" id="PF00587">
    <property type="entry name" value="tRNA-synt_2b"/>
    <property type="match status" value="1"/>
</dbReference>
<dbReference type="Pfam" id="PF07973">
    <property type="entry name" value="tRNA_SAD"/>
    <property type="match status" value="1"/>
</dbReference>
<dbReference type="PRINTS" id="PR01047">
    <property type="entry name" value="TRNASYNTHTHR"/>
</dbReference>
<dbReference type="SMART" id="SM00863">
    <property type="entry name" value="tRNA_SAD"/>
    <property type="match status" value="1"/>
</dbReference>
<dbReference type="SUPFAM" id="SSF52954">
    <property type="entry name" value="Class II aaRS ABD-related"/>
    <property type="match status" value="1"/>
</dbReference>
<dbReference type="SUPFAM" id="SSF55681">
    <property type="entry name" value="Class II aaRS and biotin synthetases"/>
    <property type="match status" value="1"/>
</dbReference>
<dbReference type="SUPFAM" id="SSF81271">
    <property type="entry name" value="TGS-like"/>
    <property type="match status" value="1"/>
</dbReference>
<dbReference type="SUPFAM" id="SSF55186">
    <property type="entry name" value="ThrRS/AlaRS common domain"/>
    <property type="match status" value="1"/>
</dbReference>
<dbReference type="PROSITE" id="PS50862">
    <property type="entry name" value="AA_TRNA_LIGASE_II"/>
    <property type="match status" value="1"/>
</dbReference>
<dbReference type="PROSITE" id="PS51880">
    <property type="entry name" value="TGS"/>
    <property type="match status" value="1"/>
</dbReference>
<proteinExistence type="inferred from homology"/>
<keyword id="KW-0030">Aminoacyl-tRNA synthetase</keyword>
<keyword id="KW-0067">ATP-binding</keyword>
<keyword id="KW-0963">Cytoplasm</keyword>
<keyword id="KW-0436">Ligase</keyword>
<keyword id="KW-0479">Metal-binding</keyword>
<keyword id="KW-0547">Nucleotide-binding</keyword>
<keyword id="KW-0648">Protein biosynthesis</keyword>
<keyword id="KW-0694">RNA-binding</keyword>
<keyword id="KW-0820">tRNA-binding</keyword>
<keyword id="KW-0862">Zinc</keyword>
<protein>
    <recommendedName>
        <fullName evidence="1">Threonine--tRNA ligase</fullName>
        <ecNumber evidence="1">6.1.1.3</ecNumber>
    </recommendedName>
    <alternativeName>
        <fullName evidence="1">Threonyl-tRNA synthetase</fullName>
        <shortName evidence="1">ThrRS</shortName>
    </alternativeName>
</protein>
<feature type="chain" id="PRO_1000020450" description="Threonine--tRNA ligase">
    <location>
        <begin position="1"/>
        <end position="635"/>
    </location>
</feature>
<feature type="domain" description="TGS" evidence="2">
    <location>
        <begin position="1"/>
        <end position="61"/>
    </location>
</feature>
<feature type="region of interest" description="Catalytic" evidence="1">
    <location>
        <begin position="242"/>
        <end position="533"/>
    </location>
</feature>
<feature type="binding site" evidence="1">
    <location>
        <position position="333"/>
    </location>
    <ligand>
        <name>Zn(2+)</name>
        <dbReference type="ChEBI" id="CHEBI:29105"/>
    </ligand>
</feature>
<feature type="binding site" evidence="1">
    <location>
        <position position="384"/>
    </location>
    <ligand>
        <name>Zn(2+)</name>
        <dbReference type="ChEBI" id="CHEBI:29105"/>
    </ligand>
</feature>
<feature type="binding site" evidence="1">
    <location>
        <position position="510"/>
    </location>
    <ligand>
        <name>Zn(2+)</name>
        <dbReference type="ChEBI" id="CHEBI:29105"/>
    </ligand>
</feature>
<gene>
    <name evidence="1" type="primary">thrS</name>
    <name type="ordered locus">Neut_2331</name>
</gene>
<organism>
    <name type="scientific">Nitrosomonas eutropha (strain DSM 101675 / C91 / Nm57)</name>
    <dbReference type="NCBI Taxonomy" id="335283"/>
    <lineage>
        <taxon>Bacteria</taxon>
        <taxon>Pseudomonadati</taxon>
        <taxon>Pseudomonadota</taxon>
        <taxon>Betaproteobacteria</taxon>
        <taxon>Nitrosomonadales</taxon>
        <taxon>Nitrosomonadaceae</taxon>
        <taxon>Nitrosomonas</taxon>
    </lineage>
</organism>
<name>SYT_NITEC</name>
<evidence type="ECO:0000255" key="1">
    <source>
        <dbReference type="HAMAP-Rule" id="MF_00184"/>
    </source>
</evidence>
<evidence type="ECO:0000255" key="2">
    <source>
        <dbReference type="PROSITE-ProRule" id="PRU01228"/>
    </source>
</evidence>
<accession>Q0ADN4</accession>
<reference key="1">
    <citation type="journal article" date="2007" name="Environ. Microbiol.">
        <title>Whole-genome analysis of the ammonia-oxidizing bacterium, Nitrosomonas eutropha C91: implications for niche adaptation.</title>
        <authorList>
            <person name="Stein L.Y."/>
            <person name="Arp D.J."/>
            <person name="Berube P.M."/>
            <person name="Chain P.S."/>
            <person name="Hauser L."/>
            <person name="Jetten M.S."/>
            <person name="Klotz M.G."/>
            <person name="Larimer F.W."/>
            <person name="Norton J.M."/>
            <person name="Op den Camp H.J.M."/>
            <person name="Shin M."/>
            <person name="Wei X."/>
        </authorList>
    </citation>
    <scope>NUCLEOTIDE SEQUENCE [LARGE SCALE GENOMIC DNA]</scope>
    <source>
        <strain>DSM 101675 / C91 / Nm57</strain>
    </source>
</reference>